<keyword id="KW-0963">Cytoplasm</keyword>
<keyword id="KW-0274">FAD</keyword>
<keyword id="KW-0285">Flavoprotein</keyword>
<keyword id="KW-0520">NAD</keyword>
<keyword id="KW-0819">tRNA processing</keyword>
<proteinExistence type="inferred from homology"/>
<dbReference type="EMBL" id="BA000017">
    <property type="protein sequence ID" value="BAB58873.1"/>
    <property type="molecule type" value="Genomic_DNA"/>
</dbReference>
<dbReference type="RefSeq" id="WP_000249657.1">
    <property type="nucleotide sequence ID" value="NC_002758.2"/>
</dbReference>
<dbReference type="SMR" id="P64229"/>
<dbReference type="KEGG" id="sav:SAV2711"/>
<dbReference type="HOGENOM" id="CLU_007831_2_2_9"/>
<dbReference type="PhylomeDB" id="P64229"/>
<dbReference type="Proteomes" id="UP000002481">
    <property type="component" value="Chromosome"/>
</dbReference>
<dbReference type="GO" id="GO:0005829">
    <property type="term" value="C:cytosol"/>
    <property type="evidence" value="ECO:0007669"/>
    <property type="project" value="TreeGrafter"/>
</dbReference>
<dbReference type="GO" id="GO:0050660">
    <property type="term" value="F:flavin adenine dinucleotide binding"/>
    <property type="evidence" value="ECO:0007669"/>
    <property type="project" value="UniProtKB-UniRule"/>
</dbReference>
<dbReference type="GO" id="GO:0030488">
    <property type="term" value="P:tRNA methylation"/>
    <property type="evidence" value="ECO:0007669"/>
    <property type="project" value="TreeGrafter"/>
</dbReference>
<dbReference type="GO" id="GO:0002098">
    <property type="term" value="P:tRNA wobble uridine modification"/>
    <property type="evidence" value="ECO:0007669"/>
    <property type="project" value="InterPro"/>
</dbReference>
<dbReference type="FunFam" id="1.10.10.1800:FF:000001">
    <property type="entry name" value="tRNA uridine 5-carboxymethylaminomethyl modification enzyme MnmG"/>
    <property type="match status" value="1"/>
</dbReference>
<dbReference type="FunFam" id="1.10.150.570:FF:000001">
    <property type="entry name" value="tRNA uridine 5-carboxymethylaminomethyl modification enzyme MnmG"/>
    <property type="match status" value="1"/>
</dbReference>
<dbReference type="FunFam" id="3.50.50.60:FF:000002">
    <property type="entry name" value="tRNA uridine 5-carboxymethylaminomethyl modification enzyme MnmG"/>
    <property type="match status" value="1"/>
</dbReference>
<dbReference type="FunFam" id="3.50.50.60:FF:000063">
    <property type="entry name" value="tRNA uridine 5-carboxymethylaminomethyl modification enzyme MnmG"/>
    <property type="match status" value="1"/>
</dbReference>
<dbReference type="Gene3D" id="3.50.50.60">
    <property type="entry name" value="FAD/NAD(P)-binding domain"/>
    <property type="match status" value="2"/>
</dbReference>
<dbReference type="Gene3D" id="1.10.150.570">
    <property type="entry name" value="GidA associated domain, C-terminal subdomain"/>
    <property type="match status" value="1"/>
</dbReference>
<dbReference type="Gene3D" id="1.10.10.1800">
    <property type="entry name" value="tRNA uridine 5-carboxymethylaminomethyl modification enzyme MnmG/GidA"/>
    <property type="match status" value="1"/>
</dbReference>
<dbReference type="HAMAP" id="MF_00129">
    <property type="entry name" value="MnmG_GidA"/>
    <property type="match status" value="1"/>
</dbReference>
<dbReference type="InterPro" id="IPR036188">
    <property type="entry name" value="FAD/NAD-bd_sf"/>
</dbReference>
<dbReference type="InterPro" id="IPR049312">
    <property type="entry name" value="GIDA_C_N"/>
</dbReference>
<dbReference type="InterPro" id="IPR004416">
    <property type="entry name" value="MnmG"/>
</dbReference>
<dbReference type="InterPro" id="IPR002218">
    <property type="entry name" value="MnmG-rel"/>
</dbReference>
<dbReference type="InterPro" id="IPR020595">
    <property type="entry name" value="MnmG-rel_CS"/>
</dbReference>
<dbReference type="InterPro" id="IPR026904">
    <property type="entry name" value="MnmG_C"/>
</dbReference>
<dbReference type="InterPro" id="IPR047001">
    <property type="entry name" value="MnmG_C_subdom"/>
</dbReference>
<dbReference type="InterPro" id="IPR044920">
    <property type="entry name" value="MnmG_C_subdom_sf"/>
</dbReference>
<dbReference type="InterPro" id="IPR040131">
    <property type="entry name" value="MnmG_N"/>
</dbReference>
<dbReference type="NCBIfam" id="TIGR00136">
    <property type="entry name" value="mnmG_gidA"/>
    <property type="match status" value="1"/>
</dbReference>
<dbReference type="PANTHER" id="PTHR11806">
    <property type="entry name" value="GLUCOSE INHIBITED DIVISION PROTEIN A"/>
    <property type="match status" value="1"/>
</dbReference>
<dbReference type="PANTHER" id="PTHR11806:SF0">
    <property type="entry name" value="PROTEIN MTO1 HOMOLOG, MITOCHONDRIAL"/>
    <property type="match status" value="1"/>
</dbReference>
<dbReference type="Pfam" id="PF01134">
    <property type="entry name" value="GIDA"/>
    <property type="match status" value="1"/>
</dbReference>
<dbReference type="Pfam" id="PF21680">
    <property type="entry name" value="GIDA_C_1st"/>
    <property type="match status" value="1"/>
</dbReference>
<dbReference type="Pfam" id="PF13932">
    <property type="entry name" value="SAM_GIDA_C"/>
    <property type="match status" value="1"/>
</dbReference>
<dbReference type="PRINTS" id="PR00411">
    <property type="entry name" value="PNDRDTASEI"/>
</dbReference>
<dbReference type="SMART" id="SM01228">
    <property type="entry name" value="GIDA_assoc_3"/>
    <property type="match status" value="1"/>
</dbReference>
<dbReference type="SUPFAM" id="SSF51905">
    <property type="entry name" value="FAD/NAD(P)-binding domain"/>
    <property type="match status" value="1"/>
</dbReference>
<dbReference type="PROSITE" id="PS01280">
    <property type="entry name" value="GIDA_1"/>
    <property type="match status" value="1"/>
</dbReference>
<dbReference type="PROSITE" id="PS01281">
    <property type="entry name" value="GIDA_2"/>
    <property type="match status" value="1"/>
</dbReference>
<protein>
    <recommendedName>
        <fullName evidence="1">tRNA uridine 5-carboxymethylaminomethyl modification enzyme MnmG</fullName>
    </recommendedName>
    <alternativeName>
        <fullName evidence="1">Glucose-inhibited division protein A</fullName>
    </alternativeName>
</protein>
<feature type="chain" id="PRO_0000117178" description="tRNA uridine 5-carboxymethylaminomethyl modification enzyme MnmG">
    <location>
        <begin position="1"/>
        <end position="625"/>
    </location>
</feature>
<feature type="binding site" evidence="1">
    <location>
        <begin position="11"/>
        <end position="16"/>
    </location>
    <ligand>
        <name>FAD</name>
        <dbReference type="ChEBI" id="CHEBI:57692"/>
    </ligand>
</feature>
<feature type="binding site" evidence="1">
    <location>
        <position position="123"/>
    </location>
    <ligand>
        <name>FAD</name>
        <dbReference type="ChEBI" id="CHEBI:57692"/>
    </ligand>
</feature>
<feature type="binding site" evidence="1">
    <location>
        <position position="178"/>
    </location>
    <ligand>
        <name>FAD</name>
        <dbReference type="ChEBI" id="CHEBI:57692"/>
    </ligand>
</feature>
<feature type="binding site" evidence="1">
    <location>
        <begin position="270"/>
        <end position="284"/>
    </location>
    <ligand>
        <name>NAD(+)</name>
        <dbReference type="ChEBI" id="CHEBI:57540"/>
    </ligand>
</feature>
<feature type="binding site" evidence="1">
    <location>
        <position position="367"/>
    </location>
    <ligand>
        <name>FAD</name>
        <dbReference type="ChEBI" id="CHEBI:57692"/>
    </ligand>
</feature>
<comment type="function">
    <text evidence="1">NAD-binding protein involved in the addition of a carboxymethylaminomethyl (cmnm) group at the wobble position (U34) of certain tRNAs, forming tRNA-cmnm(5)s(2)U34.</text>
</comment>
<comment type="cofactor">
    <cofactor evidence="1">
        <name>FAD</name>
        <dbReference type="ChEBI" id="CHEBI:57692"/>
    </cofactor>
</comment>
<comment type="subunit">
    <text evidence="1">Homodimer. Heterotetramer of two MnmE and two MnmG subunits.</text>
</comment>
<comment type="subcellular location">
    <subcellularLocation>
        <location evidence="1">Cytoplasm</location>
    </subcellularLocation>
</comment>
<comment type="similarity">
    <text evidence="1">Belongs to the MnmG family.</text>
</comment>
<evidence type="ECO:0000255" key="1">
    <source>
        <dbReference type="HAMAP-Rule" id="MF_00129"/>
    </source>
</evidence>
<reference key="1">
    <citation type="journal article" date="2001" name="Lancet">
        <title>Whole genome sequencing of meticillin-resistant Staphylococcus aureus.</title>
        <authorList>
            <person name="Kuroda M."/>
            <person name="Ohta T."/>
            <person name="Uchiyama I."/>
            <person name="Baba T."/>
            <person name="Yuzawa H."/>
            <person name="Kobayashi I."/>
            <person name="Cui L."/>
            <person name="Oguchi A."/>
            <person name="Aoki K."/>
            <person name="Nagai Y."/>
            <person name="Lian J.-Q."/>
            <person name="Ito T."/>
            <person name="Kanamori M."/>
            <person name="Matsumaru H."/>
            <person name="Maruyama A."/>
            <person name="Murakami H."/>
            <person name="Hosoyama A."/>
            <person name="Mizutani-Ui Y."/>
            <person name="Takahashi N.K."/>
            <person name="Sawano T."/>
            <person name="Inoue R."/>
            <person name="Kaito C."/>
            <person name="Sekimizu K."/>
            <person name="Hirakawa H."/>
            <person name="Kuhara S."/>
            <person name="Goto S."/>
            <person name="Yabuzaki J."/>
            <person name="Kanehisa M."/>
            <person name="Yamashita A."/>
            <person name="Oshima K."/>
            <person name="Furuya K."/>
            <person name="Yoshino C."/>
            <person name="Shiba T."/>
            <person name="Hattori M."/>
            <person name="Ogasawara N."/>
            <person name="Hayashi H."/>
            <person name="Hiramatsu K."/>
        </authorList>
    </citation>
    <scope>NUCLEOTIDE SEQUENCE [LARGE SCALE GENOMIC DNA]</scope>
    <source>
        <strain>Mu50 / ATCC 700699</strain>
    </source>
</reference>
<organism>
    <name type="scientific">Staphylococcus aureus (strain Mu50 / ATCC 700699)</name>
    <dbReference type="NCBI Taxonomy" id="158878"/>
    <lineage>
        <taxon>Bacteria</taxon>
        <taxon>Bacillati</taxon>
        <taxon>Bacillota</taxon>
        <taxon>Bacilli</taxon>
        <taxon>Bacillales</taxon>
        <taxon>Staphylococcaceae</taxon>
        <taxon>Staphylococcus</taxon>
    </lineage>
</organism>
<gene>
    <name evidence="1" type="primary">mnmG</name>
    <name evidence="1" type="synonym">gidA</name>
    <name type="ordered locus">SAV2711</name>
</gene>
<name>MNMG_STAAM</name>
<accession>P64229</accession>
<accession>Q99QT4</accession>
<sequence>MVQEYDVIVIGAGHAGVEAGLASARRGAKTLMLTINLDNIAFMPCNPSVGGPAKGIVVREIDALGGQMAKTIDKTHIQMRMLNTGKGPAVRALRAQADKVLYQQEMKRVIEDEENLHIMQGMVDELIIEDNEVKGVRTNIGTEYLSKAVIITTGTFLRGEIILGNMKYSSGPNHQLPSITLSDNLRELGFDIVRFKTGTPPRVNSKTIDYSKTEIQPGDDVGRAFSFETTEYILDQLPCWLTYTNAETHKVIDDNLHLSAMYSGMIKGTGPRYCPSIEDKFVRFNDKPRHQLFLEPEGRNTNEVYVQGLSTSLPEHVQRQMLETIPGLEKADMMRAGYAIEYDAIVPTQLWPTLETKMIKNLYTAGQINGTSGYEEAAGQGLMAGINAAGKVLNTGEKILSRSDAYIGVLIDDLVTKGTNEPYRLLTSRAEYRLLLRHDNADLRLTDMGYELGMISEERYARFNEKRQQIDAEIKRLSDIRIKPNEHTQAIIEQHGGSRLKDGILAIDLLRRPEMTYDIILEILEEEHQLNADVEEQVEIQTKYEGYINKSLQQVEKVKRMEEKKIPEDLDYSKIDSLATEAREKLSEVKPLNIAQASRISGVNPADISILLIYLEQGKLQRVSD</sequence>